<comment type="function">
    <text evidence="1 6">Functions as antiviral protein and contributes to the defense against retroviral infections (By similarity). Acts as a capsid-specific restriction factor with the help of TRIM5 and prevents infection from non-host-adapted retroviruses. During influenza A virus infection, promotes programmed cell death by targeting ZBP1 for 'Lys-63'-linked polyubiquitination. In turn, promotes ZBP1 recruitment of RIPK3 to mediate virus-induced programmed necrosis (By similarity). Negatively regulates the function of mitochondria by enhancing mitochondrial depolarization leading to cytochrome c release and mitochondria-dependent apoptosis. Also promotes the formation of multinucleated giant cells by means of cell fusion and phagocytosis in epithelial cells (By similarity). Plays an essential role in sustaining the integrity of the inner mucus layer in the colon by controlling the exocytosis of the major component of colonic mucus MUC2 from colonic goblet cells (PubMed:32094504).</text>
</comment>
<comment type="catalytic activity">
    <reaction evidence="1">
        <text>S-ubiquitinyl-[E2 ubiquitin-conjugating enzyme]-L-cysteine + [acceptor protein]-L-lysine = [E2 ubiquitin-conjugating enzyme]-L-cysteine + N(6)-ubiquitinyl-[acceptor protein]-L-lysine.</text>
        <dbReference type="EC" id="2.3.2.27"/>
    </reaction>
</comment>
<comment type="pathway">
    <text evidence="1">Protein modification; protein ubiquitination.</text>
</comment>
<comment type="subunit">
    <text evidence="1">Homotrimer. Interacts (via B-box and SPRY domain) with TRIM5.</text>
</comment>
<comment type="subcellular location">
    <subcellularLocation>
        <location evidence="1">Cytoplasm</location>
    </subcellularLocation>
    <subcellularLocation>
        <location evidence="1">Mitochondrion</location>
    </subcellularLocation>
</comment>
<comment type="alternative products">
    <event type="alternative splicing"/>
    <isoform>
        <id>Q99PP6-1</id>
        <name>Alpha</name>
        <sequence type="displayed"/>
    </isoform>
    <isoform>
        <id>Q99PP6-2</id>
        <name>Beta</name>
        <sequence type="described" ref="VSP_011923 VSP_011924"/>
    </isoform>
    <isoform>
        <id>Q99PP6-3</id>
        <name>Gamma</name>
        <sequence type="described" ref="VSP_011925 VSP_011926"/>
    </isoform>
</comment>
<comment type="disruption phenotype">
    <text evidence="6">Trim34a- and TRIM34b-deficient mice show an impaired integrity of the inner mucus layer.</text>
</comment>
<comment type="similarity">
    <text evidence="8">Belongs to the TRIM/RBCC family.</text>
</comment>
<feature type="chain" id="PRO_0000056249" description="E3 ubiquitin-protein ligase TRIM34A">
    <location>
        <begin position="1"/>
        <end position="485"/>
    </location>
</feature>
<feature type="domain" description="B30.2/SPRY" evidence="5">
    <location>
        <begin position="282"/>
        <end position="485"/>
    </location>
</feature>
<feature type="zinc finger region" description="RING-type" evidence="4">
    <location>
        <begin position="15"/>
        <end position="59"/>
    </location>
</feature>
<feature type="zinc finger region" description="B box-type" evidence="3">
    <location>
        <begin position="91"/>
        <end position="132"/>
    </location>
</feature>
<feature type="coiled-coil region" evidence="2">
    <location>
        <begin position="136"/>
        <end position="170"/>
    </location>
</feature>
<feature type="binding site" evidence="3">
    <location>
        <position position="96"/>
    </location>
    <ligand>
        <name>Zn(2+)</name>
        <dbReference type="ChEBI" id="CHEBI:29105"/>
    </ligand>
</feature>
<feature type="binding site" evidence="3">
    <location>
        <position position="99"/>
    </location>
    <ligand>
        <name>Zn(2+)</name>
        <dbReference type="ChEBI" id="CHEBI:29105"/>
    </ligand>
</feature>
<feature type="binding site" evidence="3">
    <location>
        <position position="118"/>
    </location>
    <ligand>
        <name>Zn(2+)</name>
        <dbReference type="ChEBI" id="CHEBI:29105"/>
    </ligand>
</feature>
<feature type="binding site" evidence="3">
    <location>
        <position position="124"/>
    </location>
    <ligand>
        <name>Zn(2+)</name>
        <dbReference type="ChEBI" id="CHEBI:29105"/>
    </ligand>
</feature>
<feature type="splice variant" id="VSP_011923" description="In isoform Beta." evidence="7">
    <original>DNFTFNPENLNLNLILSEDHRQVTSVSIWPFKCCNNGILG</original>
    <variation>GKKLQMLKSLCSDHLSQVCGSMWPYHLCLLCYLIHIMNSS</variation>
    <location>
        <begin position="300"/>
        <end position="339"/>
    </location>
</feature>
<feature type="splice variant" id="VSP_011925" description="In isoform Gamma." evidence="7">
    <original>DNFTFNPENLNLNLILSEDHRQVTSVS</original>
    <variation>GSYSVYKVGFKYRAIFLPQLPRCSTAG</variation>
    <location>
        <begin position="300"/>
        <end position="326"/>
    </location>
</feature>
<feature type="splice variant" id="VSP_011926" description="In isoform Gamma." evidence="7">
    <location>
        <begin position="327"/>
        <end position="485"/>
    </location>
</feature>
<feature type="splice variant" id="VSP_011924" description="In isoform Beta." evidence="7">
    <location>
        <begin position="340"/>
        <end position="485"/>
    </location>
</feature>
<feature type="sequence conflict" description="In Ref. 1; AAG53514/AAG53513." evidence="8" ref="1">
    <original>T</original>
    <variation>S</variation>
    <location>
        <position position="293"/>
    </location>
</feature>
<feature type="sequence conflict" description="In Ref. 1; AAG53512." evidence="8" ref="1">
    <original>V</original>
    <variation>A</variation>
    <location>
        <position position="430"/>
    </location>
</feature>
<dbReference type="EC" id="2.3.2.27" evidence="1"/>
<dbReference type="EMBL" id="AF220139">
    <property type="protein sequence ID" value="AAG53512.1"/>
    <property type="molecule type" value="mRNA"/>
</dbReference>
<dbReference type="EMBL" id="AF220140">
    <property type="protein sequence ID" value="AAG53513.1"/>
    <property type="molecule type" value="mRNA"/>
</dbReference>
<dbReference type="EMBL" id="AF220141">
    <property type="protein sequence ID" value="AAG53514.1"/>
    <property type="molecule type" value="mRNA"/>
</dbReference>
<dbReference type="EMBL" id="AC123830">
    <property type="status" value="NOT_ANNOTATED_CDS"/>
    <property type="molecule type" value="Genomic_DNA"/>
</dbReference>
<dbReference type="CCDS" id="CCDS52342.1">
    <molecule id="Q99PP6-1"/>
</dbReference>
<dbReference type="RefSeq" id="NP_001344608.1">
    <molecule id="Q99PP6-1"/>
    <property type="nucleotide sequence ID" value="NM_001357679.2"/>
</dbReference>
<dbReference type="RefSeq" id="NP_001408613.1">
    <molecule id="Q99PP6-1"/>
    <property type="nucleotide sequence ID" value="NM_001421684.1"/>
</dbReference>
<dbReference type="RefSeq" id="NP_109609.2">
    <molecule id="Q99PP6-1"/>
    <property type="nucleotide sequence ID" value="NM_030684.4"/>
</dbReference>
<dbReference type="RefSeq" id="XP_006508430.1">
    <property type="nucleotide sequence ID" value="XM_006508367.1"/>
</dbReference>
<dbReference type="RefSeq" id="XP_006508431.1">
    <property type="nucleotide sequence ID" value="XM_006508368.1"/>
</dbReference>
<dbReference type="RefSeq" id="XP_006508432.1">
    <molecule id="Q99PP6-1"/>
    <property type="nucleotide sequence ID" value="XM_006508369.4"/>
</dbReference>
<dbReference type="SMR" id="Q99PP6"/>
<dbReference type="FunCoup" id="Q99PP6">
    <property type="interactions" value="378"/>
</dbReference>
<dbReference type="STRING" id="10090.ENSMUSP00000055058"/>
<dbReference type="GlyGen" id="Q99PP6">
    <property type="glycosylation" value="1 site, 1 O-linked glycan (1 site)"/>
</dbReference>
<dbReference type="iPTMnet" id="Q99PP6"/>
<dbReference type="PhosphoSitePlus" id="Q99PP6"/>
<dbReference type="SwissPalm" id="Q99PP6"/>
<dbReference type="jPOST" id="Q99PP6"/>
<dbReference type="PaxDb" id="10090-ENSMUSP00000055058"/>
<dbReference type="ProteomicsDB" id="258838">
    <molecule id="Q99PP6-1"/>
</dbReference>
<dbReference type="ProteomicsDB" id="258839">
    <molecule id="Q99PP6-2"/>
</dbReference>
<dbReference type="ProteomicsDB" id="258840">
    <molecule id="Q99PP6-3"/>
</dbReference>
<dbReference type="ProteomicsDB" id="334753"/>
<dbReference type="DNASU" id="94094"/>
<dbReference type="Ensembl" id="ENSMUST00000060315.12">
    <molecule id="Q99PP6-1"/>
    <property type="protein sequence ID" value="ENSMUSP00000055058.6"/>
    <property type="gene ID" value="ENSMUSG00000056144.15"/>
</dbReference>
<dbReference type="Ensembl" id="ENSMUST00000106848.8">
    <molecule id="Q99PP6-1"/>
    <property type="protein sequence ID" value="ENSMUSP00000102461.2"/>
    <property type="gene ID" value="ENSMUSG00000056144.15"/>
</dbReference>
<dbReference type="Ensembl" id="ENSMUST00000106849.9">
    <molecule id="Q99PP6-1"/>
    <property type="protein sequence ID" value="ENSMUSP00000102462.3"/>
    <property type="gene ID" value="ENSMUSG00000056144.15"/>
</dbReference>
<dbReference type="GeneID" id="94094"/>
<dbReference type="KEGG" id="mmu:94094"/>
<dbReference type="UCSC" id="uc029wnk.1">
    <molecule id="Q99PP6-2"/>
    <property type="organism name" value="mouse"/>
</dbReference>
<dbReference type="UCSC" id="uc029wnl.1">
    <molecule id="Q99PP6-3"/>
    <property type="organism name" value="mouse"/>
</dbReference>
<dbReference type="AGR" id="MGI:2137359"/>
<dbReference type="CTD" id="94094"/>
<dbReference type="MGI" id="MGI:2137359">
    <property type="gene designation" value="Trim34a"/>
</dbReference>
<dbReference type="VEuPathDB" id="HostDB:ENSMUSG00000056144"/>
<dbReference type="eggNOG" id="KOG2177">
    <property type="taxonomic scope" value="Eukaryota"/>
</dbReference>
<dbReference type="GeneTree" id="ENSGT00940000162320"/>
<dbReference type="HOGENOM" id="CLU_013137_6_1_1"/>
<dbReference type="InParanoid" id="Q99PP6"/>
<dbReference type="OMA" id="ELTHVQC"/>
<dbReference type="OrthoDB" id="264917at2759"/>
<dbReference type="PhylomeDB" id="Q99PP6"/>
<dbReference type="TreeFam" id="TF338674"/>
<dbReference type="UniPathway" id="UPA00143"/>
<dbReference type="BioGRID-ORCS" id="94094">
    <property type="hits" value="0 hits in 47 CRISPR screens"/>
</dbReference>
<dbReference type="ChiTaRS" id="Trim34a">
    <property type="organism name" value="mouse"/>
</dbReference>
<dbReference type="PRO" id="PR:Q99PP6"/>
<dbReference type="Proteomes" id="UP000000589">
    <property type="component" value="Chromosome 7"/>
</dbReference>
<dbReference type="RNAct" id="Q99PP6">
    <property type="molecule type" value="protein"/>
</dbReference>
<dbReference type="Bgee" id="ENSMUSG00000056144">
    <property type="expression patterns" value="Expressed in peripheral lymph node and 149 other cell types or tissues"/>
</dbReference>
<dbReference type="GO" id="GO:0005739">
    <property type="term" value="C:mitochondrion"/>
    <property type="evidence" value="ECO:0007669"/>
    <property type="project" value="UniProtKB-SubCell"/>
</dbReference>
<dbReference type="GO" id="GO:0016740">
    <property type="term" value="F:transferase activity"/>
    <property type="evidence" value="ECO:0007669"/>
    <property type="project" value="UniProtKB-KW"/>
</dbReference>
<dbReference type="GO" id="GO:0008270">
    <property type="term" value="F:zinc ion binding"/>
    <property type="evidence" value="ECO:0007669"/>
    <property type="project" value="UniProtKB-KW"/>
</dbReference>
<dbReference type="GO" id="GO:0051607">
    <property type="term" value="P:defense response to virus"/>
    <property type="evidence" value="ECO:0007669"/>
    <property type="project" value="UniProtKB-KW"/>
</dbReference>
<dbReference type="GO" id="GO:0016567">
    <property type="term" value="P:protein ubiquitination"/>
    <property type="evidence" value="ECO:0007669"/>
    <property type="project" value="UniProtKB-UniPathway"/>
</dbReference>
<dbReference type="CDD" id="cd19761">
    <property type="entry name" value="Bbox2_TRIM5-like"/>
    <property type="match status" value="1"/>
</dbReference>
<dbReference type="CDD" id="cd16591">
    <property type="entry name" value="RING-HC_TRIM5-like_C-IV"/>
    <property type="match status" value="1"/>
</dbReference>
<dbReference type="CDD" id="cd15825">
    <property type="entry name" value="SPRY_PRY_TRIM34"/>
    <property type="match status" value="1"/>
</dbReference>
<dbReference type="FunFam" id="3.30.160.60:FF:000386">
    <property type="entry name" value="Tripartite motif-containing 5 (Predicted)"/>
    <property type="match status" value="1"/>
</dbReference>
<dbReference type="Gene3D" id="2.60.120.920">
    <property type="match status" value="1"/>
</dbReference>
<dbReference type="Gene3D" id="3.30.160.60">
    <property type="entry name" value="Classic Zinc Finger"/>
    <property type="match status" value="1"/>
</dbReference>
<dbReference type="Gene3D" id="3.30.40.10">
    <property type="entry name" value="Zinc/RING finger domain, C3HC4 (zinc finger)"/>
    <property type="match status" value="1"/>
</dbReference>
<dbReference type="InterPro" id="IPR001870">
    <property type="entry name" value="B30.2/SPRY"/>
</dbReference>
<dbReference type="InterPro" id="IPR043136">
    <property type="entry name" value="B30.2/SPRY_sf"/>
</dbReference>
<dbReference type="InterPro" id="IPR003879">
    <property type="entry name" value="Butyrophylin_SPRY"/>
</dbReference>
<dbReference type="InterPro" id="IPR013320">
    <property type="entry name" value="ConA-like_dom_sf"/>
</dbReference>
<dbReference type="InterPro" id="IPR003877">
    <property type="entry name" value="SPRY_dom"/>
</dbReference>
<dbReference type="InterPro" id="IPR050143">
    <property type="entry name" value="TRIM/RBCC"/>
</dbReference>
<dbReference type="InterPro" id="IPR035826">
    <property type="entry name" value="TRIM34_PRY/SPRY"/>
</dbReference>
<dbReference type="InterPro" id="IPR027370">
    <property type="entry name" value="Znf-RING_euk"/>
</dbReference>
<dbReference type="InterPro" id="IPR000315">
    <property type="entry name" value="Znf_B-box"/>
</dbReference>
<dbReference type="InterPro" id="IPR001841">
    <property type="entry name" value="Znf_RING"/>
</dbReference>
<dbReference type="InterPro" id="IPR013083">
    <property type="entry name" value="Znf_RING/FYVE/PHD"/>
</dbReference>
<dbReference type="InterPro" id="IPR017907">
    <property type="entry name" value="Znf_RING_CS"/>
</dbReference>
<dbReference type="PANTHER" id="PTHR24103">
    <property type="entry name" value="E3 UBIQUITIN-PROTEIN LIGASE TRIM"/>
    <property type="match status" value="1"/>
</dbReference>
<dbReference type="Pfam" id="PF00622">
    <property type="entry name" value="SPRY"/>
    <property type="match status" value="1"/>
</dbReference>
<dbReference type="Pfam" id="PF00643">
    <property type="entry name" value="zf-B_box"/>
    <property type="match status" value="1"/>
</dbReference>
<dbReference type="Pfam" id="PF13445">
    <property type="entry name" value="zf-RING_UBOX"/>
    <property type="match status" value="1"/>
</dbReference>
<dbReference type="PRINTS" id="PR01407">
    <property type="entry name" value="BUTYPHLNCDUF"/>
</dbReference>
<dbReference type="SMART" id="SM00336">
    <property type="entry name" value="BBOX"/>
    <property type="match status" value="1"/>
</dbReference>
<dbReference type="SMART" id="SM00184">
    <property type="entry name" value="RING"/>
    <property type="match status" value="1"/>
</dbReference>
<dbReference type="SMART" id="SM00449">
    <property type="entry name" value="SPRY"/>
    <property type="match status" value="1"/>
</dbReference>
<dbReference type="SUPFAM" id="SSF57845">
    <property type="entry name" value="B-box zinc-binding domain"/>
    <property type="match status" value="1"/>
</dbReference>
<dbReference type="SUPFAM" id="SSF49899">
    <property type="entry name" value="Concanavalin A-like lectins/glucanases"/>
    <property type="match status" value="1"/>
</dbReference>
<dbReference type="SUPFAM" id="SSF57850">
    <property type="entry name" value="RING/U-box"/>
    <property type="match status" value="1"/>
</dbReference>
<dbReference type="PROSITE" id="PS50188">
    <property type="entry name" value="B302_SPRY"/>
    <property type="match status" value="1"/>
</dbReference>
<dbReference type="PROSITE" id="PS50119">
    <property type="entry name" value="ZF_BBOX"/>
    <property type="match status" value="1"/>
</dbReference>
<dbReference type="PROSITE" id="PS00518">
    <property type="entry name" value="ZF_RING_1"/>
    <property type="match status" value="1"/>
</dbReference>
<dbReference type="PROSITE" id="PS50089">
    <property type="entry name" value="ZF_RING_2"/>
    <property type="match status" value="1"/>
</dbReference>
<proteinExistence type="evidence at transcript level"/>
<name>TR34A_MOUSE</name>
<reference key="1">
    <citation type="journal article" date="2001" name="EMBO J.">
        <title>The tripartite motif family identifies cell compartments.</title>
        <authorList>
            <person name="Reymond A."/>
            <person name="Meroni G."/>
            <person name="Fantozzi A."/>
            <person name="Merla G."/>
            <person name="Cairo S."/>
            <person name="Luzi L."/>
            <person name="Riganelli D."/>
            <person name="Zanaria E."/>
            <person name="Messali S."/>
            <person name="Cainarca S."/>
            <person name="Guffanti A."/>
            <person name="Minucci S."/>
            <person name="Pelicci P.G."/>
            <person name="Ballabio A."/>
        </authorList>
    </citation>
    <scope>NUCLEOTIDE SEQUENCE [MRNA] (ISOFORMS ALPHA; BETA AND GAMMA)</scope>
</reference>
<reference key="2">
    <citation type="journal article" date="2009" name="PLoS Biol.">
        <title>Lineage-specific biology revealed by a finished genome assembly of the mouse.</title>
        <authorList>
            <person name="Church D.M."/>
            <person name="Goodstadt L."/>
            <person name="Hillier L.W."/>
            <person name="Zody M.C."/>
            <person name="Goldstein S."/>
            <person name="She X."/>
            <person name="Bult C.J."/>
            <person name="Agarwala R."/>
            <person name="Cherry J.L."/>
            <person name="DiCuccio M."/>
            <person name="Hlavina W."/>
            <person name="Kapustin Y."/>
            <person name="Meric P."/>
            <person name="Maglott D."/>
            <person name="Birtle Z."/>
            <person name="Marques A.C."/>
            <person name="Graves T."/>
            <person name="Zhou S."/>
            <person name="Teague B."/>
            <person name="Potamousis K."/>
            <person name="Churas C."/>
            <person name="Place M."/>
            <person name="Herschleb J."/>
            <person name="Runnheim R."/>
            <person name="Forrest D."/>
            <person name="Amos-Landgraf J."/>
            <person name="Schwartz D.C."/>
            <person name="Cheng Z."/>
            <person name="Lindblad-Toh K."/>
            <person name="Eichler E.E."/>
            <person name="Ponting C.P."/>
        </authorList>
    </citation>
    <scope>NUCLEOTIDE SEQUENCE [LARGE SCALE GENOMIC DNA]</scope>
    <source>
        <strain>C57BL/6J</strain>
    </source>
</reference>
<reference key="3">
    <citation type="journal article" date="2021" name="Cell. Mol. Immunol.">
        <title>TRIM34 attenuates colon inflammation and tumorigenesis by sustaining barrier integrity.</title>
        <authorList>
            <person name="Lian Q."/>
            <person name="Yan S."/>
            <person name="Yin Q."/>
            <person name="Yan C."/>
            <person name="Zheng W."/>
            <person name="Gu W."/>
            <person name="Zhao X."/>
            <person name="Fan W."/>
            <person name="Li X."/>
            <person name="Ma L."/>
            <person name="Ling Z."/>
            <person name="Zhang Y."/>
            <person name="Liu J."/>
            <person name="Li J."/>
            <person name="Sun B."/>
        </authorList>
    </citation>
    <scope>DISRUPTION PHENOTYPE</scope>
    <scope>FUNCTION</scope>
</reference>
<protein>
    <recommendedName>
        <fullName evidence="8">E3 ubiquitin-protein ligase TRIM34A</fullName>
        <ecNumber evidence="1">2.3.2.27</ecNumber>
    </recommendedName>
    <alternativeName>
        <fullName evidence="9">Tripartite motif-containing protein 34A</fullName>
    </alternativeName>
</protein>
<sequence>MASTGLTNIQEKTTCPVCQELLTKALSLGCGHRVCQACLITKKNAVINPREKSSCPVCGTRFSLENLQANKHLANVVERLGEVKLKPDIGTKRDLCVHHGEKLLLFCKEDKKAICWVCERSQEHRGHHTFLWEEAVRECQENLQKALTRLRKEQEKVETLEADIKEDRLSWKCQVQTERQRIQTGFNQLRRILDKEEQRELKRLREEEQMILDSLAGAEAELAQQSQLVEELISDLELRREWSDTELLQDMSGILKWSQIWTLKKPKAVSKKLSMVFQAPDLSGMLQKFRELTAVRAYWDNFTFNPENLNLNLILSEDHRQVTSVSIWPFKCCNNGILGSKCFSSGKHYWEVDVSEKKAWTLGVYTRKRTLRFDVRQRKGQPNGYHRYKPQNGYWVIGLQHGSKYSIFEDSSNCDPTVLNPFVATPLHRVGVFLDCEEGTVSFLNVTNHGSLIYKFSQCCFSQPAYPYFNPWDCPAPMTLCPLNS</sequence>
<organism>
    <name type="scientific">Mus musculus</name>
    <name type="common">Mouse</name>
    <dbReference type="NCBI Taxonomy" id="10090"/>
    <lineage>
        <taxon>Eukaryota</taxon>
        <taxon>Metazoa</taxon>
        <taxon>Chordata</taxon>
        <taxon>Craniata</taxon>
        <taxon>Vertebrata</taxon>
        <taxon>Euteleostomi</taxon>
        <taxon>Mammalia</taxon>
        <taxon>Eutheria</taxon>
        <taxon>Euarchontoglires</taxon>
        <taxon>Glires</taxon>
        <taxon>Rodentia</taxon>
        <taxon>Myomorpha</taxon>
        <taxon>Muroidea</taxon>
        <taxon>Muridae</taxon>
        <taxon>Murinae</taxon>
        <taxon>Mus</taxon>
        <taxon>Mus</taxon>
    </lineage>
</organism>
<accession>Q99PP6</accession>
<accession>E9PYZ4</accession>
<accession>F8VPK2</accession>
<accession>Q99PP4</accession>
<accession>Q99PP5</accession>
<gene>
    <name evidence="9" type="primary">Trim34a</name>
</gene>
<evidence type="ECO:0000250" key="1">
    <source>
        <dbReference type="UniProtKB" id="Q9BYJ4"/>
    </source>
</evidence>
<evidence type="ECO:0000255" key="2"/>
<evidence type="ECO:0000255" key="3">
    <source>
        <dbReference type="PROSITE-ProRule" id="PRU00024"/>
    </source>
</evidence>
<evidence type="ECO:0000255" key="4">
    <source>
        <dbReference type="PROSITE-ProRule" id="PRU00175"/>
    </source>
</evidence>
<evidence type="ECO:0000255" key="5">
    <source>
        <dbReference type="PROSITE-ProRule" id="PRU00548"/>
    </source>
</evidence>
<evidence type="ECO:0000269" key="6">
    <source>
    </source>
</evidence>
<evidence type="ECO:0000303" key="7">
    <source>
    </source>
</evidence>
<evidence type="ECO:0000305" key="8"/>
<evidence type="ECO:0000312" key="9">
    <source>
        <dbReference type="MGI" id="MGI:2137359"/>
    </source>
</evidence>
<keyword id="KW-0025">Alternative splicing</keyword>
<keyword id="KW-0051">Antiviral defense</keyword>
<keyword id="KW-0175">Coiled coil</keyword>
<keyword id="KW-0963">Cytoplasm</keyword>
<keyword id="KW-0479">Metal-binding</keyword>
<keyword id="KW-0496">Mitochondrion</keyword>
<keyword id="KW-1185">Reference proteome</keyword>
<keyword id="KW-0808">Transferase</keyword>
<keyword id="KW-0862">Zinc</keyword>
<keyword id="KW-0863">Zinc-finger</keyword>